<protein>
    <recommendedName>
        <fullName evidence="7">Peptide deformylase, mitochondrial</fullName>
        <ecNumber evidence="5">3.5.1.88</ecNumber>
    </recommendedName>
    <alternativeName>
        <fullName>Polypeptide deformylase</fullName>
    </alternativeName>
</protein>
<evidence type="ECO:0000250" key="1">
    <source>
        <dbReference type="UniProtKB" id="P0A6K3"/>
    </source>
</evidence>
<evidence type="ECO:0000269" key="2">
    <source>
    </source>
</evidence>
<evidence type="ECO:0000269" key="3">
    <source>
    </source>
</evidence>
<evidence type="ECO:0000269" key="4">
    <source>
    </source>
</evidence>
<evidence type="ECO:0000269" key="5">
    <source>
    </source>
</evidence>
<evidence type="ECO:0000303" key="6">
    <source>
    </source>
</evidence>
<evidence type="ECO:0000303" key="7">
    <source>
    </source>
</evidence>
<evidence type="ECO:0000305" key="8"/>
<evidence type="ECO:0000305" key="9">
    <source>
    </source>
</evidence>
<evidence type="ECO:0000305" key="10">
    <source>
    </source>
</evidence>
<evidence type="ECO:0007829" key="11">
    <source>
        <dbReference type="PDB" id="3G5K"/>
    </source>
</evidence>
<proteinExistence type="evidence at protein level"/>
<name>DEFM_HUMAN</name>
<accession>Q9HBH1</accession>
<accession>Q8WUN6</accession>
<keyword id="KW-0002">3D-structure</keyword>
<keyword id="KW-0170">Cobalt</keyword>
<keyword id="KW-0378">Hydrolase</keyword>
<keyword id="KW-0479">Metal-binding</keyword>
<keyword id="KW-0496">Mitochondrion</keyword>
<keyword id="KW-0648">Protein biosynthesis</keyword>
<keyword id="KW-1267">Proteomics identification</keyword>
<keyword id="KW-1185">Reference proteome</keyword>
<keyword id="KW-0809">Transit peptide</keyword>
<comment type="function">
    <text evidence="2 4 5">Removes the formyl group from the N-terminal Met of newly synthesized proteins.</text>
</comment>
<comment type="catalytic activity">
    <reaction evidence="2 4 5">
        <text>N-terminal N-formyl-L-methionyl-[peptide] + H2O = N-terminal L-methionyl-[peptide] + formate</text>
        <dbReference type="Rhea" id="RHEA:24420"/>
        <dbReference type="Rhea" id="RHEA-COMP:10639"/>
        <dbReference type="Rhea" id="RHEA-COMP:10640"/>
        <dbReference type="ChEBI" id="CHEBI:15377"/>
        <dbReference type="ChEBI" id="CHEBI:15740"/>
        <dbReference type="ChEBI" id="CHEBI:49298"/>
        <dbReference type="ChEBI" id="CHEBI:64731"/>
        <dbReference type="EC" id="3.5.1.88"/>
    </reaction>
</comment>
<comment type="cofactor">
    <cofactor evidence="10">
        <name>Co(2+)</name>
        <dbReference type="ChEBI" id="CHEBI:48828"/>
    </cofactor>
    <text evidence="10">Binds 1 Co(2+) ion.</text>
</comment>
<comment type="subunit">
    <text evidence="5">Homodimer.</text>
</comment>
<comment type="subcellular location">
    <subcellularLocation>
        <location evidence="2 4">Mitochondrion</location>
    </subcellularLocation>
</comment>
<comment type="tissue specificity">
    <text evidence="2">Ubiquitous.</text>
</comment>
<comment type="similarity">
    <text evidence="8">Belongs to the polypeptide deformylase family.</text>
</comment>
<sequence length="243" mass="27013">MARLWGALSLWPLWAAVPWGGAAAVGVRACSSTAAPDGVEGPALRRSYWRHLRRLVLGPPEPPFSHVCQVGDPVLRGVAAPVERAQLGGPELQRLTQRLVQVMRRRRCVGLSAPQLGVPRQVLALELPEALCRECPPRQRALRQMEPFPLRVFVNPSLRVLDSRLVTFPEGCESVAGFLACVPRFQAVQISGLDPNGEQVVWQASGWAARIIQHEMDHLQGCLFIDKMDSRTFTNVYWMKVND</sequence>
<feature type="transit peptide" description="Mitochondrion" evidence="9">
    <location>
        <begin position="1"/>
        <end position="39"/>
    </location>
</feature>
<feature type="chain" id="PRO_0000006729" description="Peptide deformylase, mitochondrial">
    <location>
        <begin position="40"/>
        <end position="243"/>
    </location>
</feature>
<feature type="region of interest" description="Hydrophobic dimerization interface" evidence="5">
    <location>
        <begin position="165"/>
        <end position="175"/>
    </location>
</feature>
<feature type="active site" evidence="1">
    <location>
        <position position="215"/>
    </location>
</feature>
<feature type="binding site" evidence="5">
    <location>
        <position position="71"/>
    </location>
    <ligand>
        <name>substrate</name>
    </ligand>
</feature>
<feature type="binding site" evidence="5">
    <location>
        <position position="169"/>
    </location>
    <ligand>
        <name>substrate</name>
    </ligand>
</feature>
<feature type="binding site" evidence="5">
    <location>
        <position position="171"/>
    </location>
    <ligand>
        <name>substrate</name>
    </ligand>
</feature>
<feature type="binding site" evidence="5">
    <location>
        <position position="172"/>
    </location>
    <ligand>
        <name>Co(2+)</name>
        <dbReference type="ChEBI" id="CHEBI:48828"/>
        <note>catalytic</note>
    </ligand>
</feature>
<feature type="binding site" evidence="5">
    <location>
        <position position="214"/>
    </location>
    <ligand>
        <name>Co(2+)</name>
        <dbReference type="ChEBI" id="CHEBI:48828"/>
        <note>catalytic</note>
    </ligand>
</feature>
<feature type="binding site" evidence="5">
    <location>
        <position position="218"/>
    </location>
    <ligand>
        <name>Co(2+)</name>
        <dbReference type="ChEBI" id="CHEBI:48828"/>
        <note>catalytic</note>
    </ligand>
</feature>
<feature type="sequence variant" id="VAR_060122" description="In dbSNP:rs8057004." evidence="3">
    <original>W</original>
    <variation>R</variation>
    <location>
        <position position="11"/>
    </location>
</feature>
<feature type="helix" evidence="11">
    <location>
        <begin position="73"/>
        <end position="75"/>
    </location>
</feature>
<feature type="helix" evidence="11">
    <location>
        <begin position="84"/>
        <end position="86"/>
    </location>
</feature>
<feature type="helix" evidence="11">
    <location>
        <begin position="90"/>
        <end position="105"/>
    </location>
</feature>
<feature type="strand" evidence="11">
    <location>
        <begin position="109"/>
        <end position="112"/>
    </location>
</feature>
<feature type="helix" evidence="11">
    <location>
        <begin position="113"/>
        <end position="116"/>
    </location>
</feature>
<feature type="strand" evidence="11">
    <location>
        <begin position="120"/>
        <end position="127"/>
    </location>
</feature>
<feature type="helix" evidence="11">
    <location>
        <begin position="129"/>
        <end position="133"/>
    </location>
</feature>
<feature type="helix" evidence="11">
    <location>
        <begin position="137"/>
        <end position="143"/>
    </location>
</feature>
<feature type="strand" evidence="11">
    <location>
        <begin position="148"/>
        <end position="170"/>
    </location>
</feature>
<feature type="strand" evidence="11">
    <location>
        <begin position="178"/>
        <end position="193"/>
    </location>
</feature>
<feature type="strand" evidence="11">
    <location>
        <begin position="199"/>
        <end position="205"/>
    </location>
</feature>
<feature type="helix" evidence="11">
    <location>
        <begin position="206"/>
        <end position="219"/>
    </location>
</feature>
<feature type="helix" evidence="11">
    <location>
        <begin position="224"/>
        <end position="226"/>
    </location>
</feature>
<feature type="helix" evidence="11">
    <location>
        <begin position="230"/>
        <end position="232"/>
    </location>
</feature>
<dbReference type="EC" id="3.5.1.88" evidence="5"/>
<dbReference type="EMBL" id="AF239156">
    <property type="protein sequence ID" value="AAG33968.1"/>
    <property type="molecule type" value="mRNA"/>
</dbReference>
<dbReference type="EMBL" id="AF322879">
    <property type="protein sequence ID" value="AAK15624.1"/>
    <property type="molecule type" value="mRNA"/>
</dbReference>
<dbReference type="EMBL" id="BC019912">
    <property type="protein sequence ID" value="AAH19912.1"/>
    <property type="molecule type" value="mRNA"/>
</dbReference>
<dbReference type="CCDS" id="CCDS10875.1"/>
<dbReference type="RefSeq" id="NP_071736.1">
    <property type="nucleotide sequence ID" value="NM_022341.2"/>
</dbReference>
<dbReference type="PDB" id="3G5K">
    <property type="method" value="X-ray"/>
    <property type="resolution" value="1.70 A"/>
    <property type="chains" value="A/B/C/D=64-243"/>
</dbReference>
<dbReference type="PDB" id="3G5P">
    <property type="method" value="X-ray"/>
    <property type="resolution" value="1.70 A"/>
    <property type="chains" value="A/B/C/D=64-243"/>
</dbReference>
<dbReference type="PDBsum" id="3G5K"/>
<dbReference type="PDBsum" id="3G5P"/>
<dbReference type="SMR" id="Q9HBH1"/>
<dbReference type="BioGRID" id="122085">
    <property type="interactions" value="114"/>
</dbReference>
<dbReference type="FunCoup" id="Q9HBH1">
    <property type="interactions" value="1253"/>
</dbReference>
<dbReference type="IntAct" id="Q9HBH1">
    <property type="interactions" value="75"/>
</dbReference>
<dbReference type="STRING" id="9606.ENSP00000288022"/>
<dbReference type="BindingDB" id="Q9HBH1"/>
<dbReference type="ChEMBL" id="CHEMBL4647"/>
<dbReference type="DrugBank" id="DB02363">
    <property type="generic name" value="2'-Monophosphoadenosine-5'-Diphosphate"/>
</dbReference>
<dbReference type="DrugBank" id="DB03814">
    <property type="generic name" value="2-(N-morpholino)ethanesulfonic acid"/>
</dbReference>
<dbReference type="DrugBank" id="DB04310">
    <property type="generic name" value="2-[(Formyl-Hydroxy-Amino)-Methyl]-Heptanoic Acid [1-(2-Hydroxymethyl-Pyrrolidine-1-Carbonyl)-2-Methyl-Propyl]-Amide"/>
</dbReference>
<dbReference type="DrugBank" id="DB02402">
    <property type="generic name" value="5-(4-Methoxyphenoxy)-2,4-Quinazolinediamine"/>
</dbReference>
<dbReference type="DrugBank" id="DB04306">
    <property type="generic name" value="5-[(4-Methylphenyl)Sulfanyl]-2,4-Quinazolinediamine"/>
</dbReference>
<dbReference type="DrugBank" id="DB01929">
    <property type="generic name" value="5-Chloryl-2,4,6-quinazolinetriamine"/>
</dbReference>
<dbReference type="DrugBank" id="DB04163">
    <property type="generic name" value="5-Phenylsulfanyl-2,4-Quinazolinediamine"/>
</dbReference>
<dbReference type="DrugBank" id="DB08878">
    <property type="generic name" value="Aminopterin"/>
</dbReference>
<dbReference type="DrugBank" id="DB04368">
    <property type="generic name" value="Bb-3497"/>
</dbReference>
<dbReference type="DrugBank" id="DB03886">
    <property type="generic name" value="Biopterin"/>
</dbReference>
<dbReference type="DrugBank" id="DB02809">
    <property type="generic name" value="Brodimoprim-4,6-Dicarboxylate"/>
</dbReference>
<dbReference type="DrugBank" id="DB04007">
    <property type="generic name" value="Bromo-WR99210"/>
</dbReference>
<dbReference type="DrugBank" id="DB12314">
    <property type="generic name" value="Chlorproguanil"/>
</dbReference>
<dbReference type="DrugBank" id="DB14763">
    <property type="generic name" value="Cycloguanil"/>
</dbReference>
<dbReference type="DrugBank" id="DB02015">
    <property type="generic name" value="Dihydrofolic Acid"/>
</dbReference>
<dbReference type="DrugBank" id="DB02026">
    <property type="generic name" value="Furo[2,3d]Pyrimidine Antifolate"/>
</dbReference>
<dbReference type="DrugBank" id="DB00371">
    <property type="generic name" value="Meprobamate"/>
</dbReference>
<dbReference type="DrugBank" id="DB03345">
    <property type="generic name" value="Mercaptoethanol"/>
</dbReference>
<dbReference type="DrugBank" id="DB04655">
    <property type="generic name" value="Metoprine"/>
</dbReference>
<dbReference type="DrugBank" id="DB06813">
    <property type="generic name" value="Pralatrexate"/>
</dbReference>
<dbReference type="DrugBank" id="DB01131">
    <property type="generic name" value="Proguanil"/>
</dbReference>
<dbReference type="DrugBank" id="DB11829">
    <property type="generic name" value="Ruboxistaurin"/>
</dbReference>
<dbReference type="DrugBank" id="DB03351">
    <property type="generic name" value="Sri-9439"/>
</dbReference>
<dbReference type="DrugBank" id="DB03060">
    <property type="generic name" value="Sri-9662"/>
</dbReference>
<dbReference type="DrugBank" id="DB01157">
    <property type="generic name" value="Trimetrexate"/>
</dbReference>
<dbReference type="SwissPalm" id="Q9HBH1"/>
<dbReference type="BioMuta" id="PDF"/>
<dbReference type="DMDM" id="17433054"/>
<dbReference type="jPOST" id="Q9HBH1"/>
<dbReference type="MassIVE" id="Q9HBH1"/>
<dbReference type="PaxDb" id="9606-ENSP00000288022"/>
<dbReference type="PeptideAtlas" id="Q9HBH1"/>
<dbReference type="ProteomicsDB" id="81550"/>
<dbReference type="Pumba" id="Q9HBH1"/>
<dbReference type="Antibodypedia" id="56384">
    <property type="antibodies" value="165 antibodies from 22 providers"/>
</dbReference>
<dbReference type="DNASU" id="64146"/>
<dbReference type="Ensembl" id="ENST00000288022.2">
    <property type="protein sequence ID" value="ENSP00000288022.1"/>
    <property type="gene ID" value="ENSG00000258429.2"/>
</dbReference>
<dbReference type="GeneID" id="64146"/>
<dbReference type="KEGG" id="hsa:64146"/>
<dbReference type="MANE-Select" id="ENST00000288022.2">
    <property type="protein sequence ID" value="ENSP00000288022.1"/>
    <property type="RefSeq nucleotide sequence ID" value="NM_022341.2"/>
    <property type="RefSeq protein sequence ID" value="NP_071736.1"/>
</dbReference>
<dbReference type="UCSC" id="uc002ewx.1">
    <property type="organism name" value="human"/>
</dbReference>
<dbReference type="AGR" id="HGNC:30012"/>
<dbReference type="CTD" id="64146"/>
<dbReference type="DisGeNET" id="64146"/>
<dbReference type="GeneCards" id="PDF"/>
<dbReference type="HGNC" id="HGNC:30012">
    <property type="gene designation" value="PDF"/>
</dbReference>
<dbReference type="HPA" id="ENSG00000258429">
    <property type="expression patterns" value="Tissue enhanced (liver)"/>
</dbReference>
<dbReference type="MIM" id="618720">
    <property type="type" value="gene"/>
</dbReference>
<dbReference type="neXtProt" id="NX_Q9HBH1"/>
<dbReference type="OpenTargets" id="ENSG00000258429"/>
<dbReference type="PharmGKB" id="PA144596394"/>
<dbReference type="VEuPathDB" id="HostDB:ENSG00000258429"/>
<dbReference type="eggNOG" id="KOG3137">
    <property type="taxonomic scope" value="Eukaryota"/>
</dbReference>
<dbReference type="GeneTree" id="ENSGT00390000018698"/>
<dbReference type="HOGENOM" id="CLU_061901_5_1_1"/>
<dbReference type="InParanoid" id="Q9HBH1"/>
<dbReference type="OMA" id="ILYPMRI"/>
<dbReference type="OrthoDB" id="276063at2759"/>
<dbReference type="PAN-GO" id="Q9HBH1">
    <property type="GO annotations" value="5 GO annotations based on evolutionary models"/>
</dbReference>
<dbReference type="PhylomeDB" id="Q9HBH1"/>
<dbReference type="TreeFam" id="TF323637"/>
<dbReference type="BRENDA" id="3.5.1.88">
    <property type="organism ID" value="2681"/>
</dbReference>
<dbReference type="PathwayCommons" id="Q9HBH1"/>
<dbReference type="SABIO-RK" id="Q9HBH1"/>
<dbReference type="SignaLink" id="Q9HBH1"/>
<dbReference type="BioGRID-ORCS" id="64146">
    <property type="hits" value="12 hits in 1153 CRISPR screens"/>
</dbReference>
<dbReference type="EvolutionaryTrace" id="Q9HBH1"/>
<dbReference type="GeneWiki" id="PDF_(gene)"/>
<dbReference type="GenomeRNAi" id="64146"/>
<dbReference type="Pharos" id="Q9HBH1">
    <property type="development level" value="Tchem"/>
</dbReference>
<dbReference type="PRO" id="PR:Q9HBH1"/>
<dbReference type="Proteomes" id="UP000005640">
    <property type="component" value="Chromosome 16"/>
</dbReference>
<dbReference type="RNAct" id="Q9HBH1">
    <property type="molecule type" value="protein"/>
</dbReference>
<dbReference type="Bgee" id="ENSG00000258429">
    <property type="expression patterns" value="Expressed in male germ line stem cell (sensu Vertebrata) in testis and 97 other cell types or tissues"/>
</dbReference>
<dbReference type="ExpressionAtlas" id="Q9HBH1">
    <property type="expression patterns" value="baseline and differential"/>
</dbReference>
<dbReference type="GO" id="GO:0005739">
    <property type="term" value="C:mitochondrion"/>
    <property type="evidence" value="ECO:0000314"/>
    <property type="project" value="HGNC-UCL"/>
</dbReference>
<dbReference type="GO" id="GO:0046872">
    <property type="term" value="F:metal ion binding"/>
    <property type="evidence" value="ECO:0007669"/>
    <property type="project" value="UniProtKB-KW"/>
</dbReference>
<dbReference type="GO" id="GO:0042586">
    <property type="term" value="F:peptide deformylase activity"/>
    <property type="evidence" value="ECO:0000314"/>
    <property type="project" value="UniProtKB"/>
</dbReference>
<dbReference type="GO" id="GO:0043686">
    <property type="term" value="P:co-translational protein modification"/>
    <property type="evidence" value="ECO:0000318"/>
    <property type="project" value="GO_Central"/>
</dbReference>
<dbReference type="GO" id="GO:0018206">
    <property type="term" value="P:peptidyl-methionine modification"/>
    <property type="evidence" value="ECO:0000314"/>
    <property type="project" value="UniProtKB"/>
</dbReference>
<dbReference type="GO" id="GO:0008284">
    <property type="term" value="P:positive regulation of cell population proliferation"/>
    <property type="evidence" value="ECO:0000315"/>
    <property type="project" value="HGNC-UCL"/>
</dbReference>
<dbReference type="GO" id="GO:0043687">
    <property type="term" value="P:post-translational protein modification"/>
    <property type="evidence" value="ECO:0000314"/>
    <property type="project" value="HGNC-UCL"/>
</dbReference>
<dbReference type="GO" id="GO:0006412">
    <property type="term" value="P:translation"/>
    <property type="evidence" value="ECO:0007669"/>
    <property type="project" value="UniProtKB-KW"/>
</dbReference>
<dbReference type="CDD" id="cd00487">
    <property type="entry name" value="Pep_deformylase"/>
    <property type="match status" value="1"/>
</dbReference>
<dbReference type="FunFam" id="3.90.45.10:FF:000003">
    <property type="entry name" value="Peptide deformylase"/>
    <property type="match status" value="1"/>
</dbReference>
<dbReference type="Gene3D" id="3.90.45.10">
    <property type="entry name" value="Peptide deformylase"/>
    <property type="match status" value="1"/>
</dbReference>
<dbReference type="HAMAP" id="MF_00163">
    <property type="entry name" value="Pep_deformylase"/>
    <property type="match status" value="1"/>
</dbReference>
<dbReference type="InterPro" id="IPR023635">
    <property type="entry name" value="Peptide_deformylase"/>
</dbReference>
<dbReference type="InterPro" id="IPR036821">
    <property type="entry name" value="Peptide_deformylase_sf"/>
</dbReference>
<dbReference type="NCBIfam" id="NF001159">
    <property type="entry name" value="PRK00150.1-3"/>
    <property type="match status" value="1"/>
</dbReference>
<dbReference type="PANTHER" id="PTHR10458">
    <property type="entry name" value="PEPTIDE DEFORMYLASE"/>
    <property type="match status" value="1"/>
</dbReference>
<dbReference type="PANTHER" id="PTHR10458:SF2">
    <property type="entry name" value="PEPTIDE DEFORMYLASE, MITOCHONDRIAL"/>
    <property type="match status" value="1"/>
</dbReference>
<dbReference type="Pfam" id="PF01327">
    <property type="entry name" value="Pep_deformylase"/>
    <property type="match status" value="1"/>
</dbReference>
<dbReference type="PRINTS" id="PR01576">
    <property type="entry name" value="PDEFORMYLASE"/>
</dbReference>
<dbReference type="SUPFAM" id="SSF56420">
    <property type="entry name" value="Peptide deformylase"/>
    <property type="match status" value="1"/>
</dbReference>
<gene>
    <name evidence="7" type="primary">PDF</name>
    <name evidence="6" type="synonym">PDF1A</name>
</gene>
<organism>
    <name type="scientific">Homo sapiens</name>
    <name type="common">Human</name>
    <dbReference type="NCBI Taxonomy" id="9606"/>
    <lineage>
        <taxon>Eukaryota</taxon>
        <taxon>Metazoa</taxon>
        <taxon>Chordata</taxon>
        <taxon>Craniata</taxon>
        <taxon>Vertebrata</taxon>
        <taxon>Euteleostomi</taxon>
        <taxon>Mammalia</taxon>
        <taxon>Eutheria</taxon>
        <taxon>Euarchontoglires</taxon>
        <taxon>Primates</taxon>
        <taxon>Haplorrhini</taxon>
        <taxon>Catarrhini</taxon>
        <taxon>Hominidae</taxon>
        <taxon>Homo</taxon>
    </lineage>
</organism>
<reference key="1">
    <citation type="journal article" date="2000" name="EMBO J.">
        <title>Identification of eukaryotic peptide deformylases reveals universality of N-terminal protein processing mechanisms.</title>
        <authorList>
            <person name="Giglione C."/>
            <person name="Serero A."/>
            <person name="Pierre M."/>
            <person name="Boisson B."/>
            <person name="Meinnel T."/>
        </authorList>
    </citation>
    <scope>NUCLEOTIDE SEQUENCE [MRNA]</scope>
</reference>
<reference key="2">
    <citation type="submission" date="2000-11" db="EMBL/GenBank/DDBJ databases">
        <title>A human homolog of bacterial peptide deformylases.</title>
        <authorList>
            <person name="Lonetto M.A."/>
            <person name="Zhu Y."/>
            <person name="Li X."/>
            <person name="Southan C."/>
        </authorList>
    </citation>
    <scope>NUCLEOTIDE SEQUENCE [MRNA]</scope>
</reference>
<reference key="3">
    <citation type="journal article" date="2004" name="Genome Res.">
        <title>The status, quality, and expansion of the NIH full-length cDNA project: the Mammalian Gene Collection (MGC).</title>
        <authorList>
            <consortium name="The MGC Project Team"/>
        </authorList>
    </citation>
    <scope>NUCLEOTIDE SEQUENCE [LARGE SCALE MRNA]</scope>
    <scope>VARIANT ARG-11</scope>
    <source>
        <tissue>Placenta</tissue>
    </source>
</reference>
<reference key="4">
    <citation type="journal article" date="2003" name="J. Biol. Chem.">
        <title>An unusual peptide deformylase features in the human mitochondrial N-terminal methionine excision pathway.</title>
        <authorList>
            <person name="Serero A."/>
            <person name="Giglione C."/>
            <person name="Sardini A."/>
            <person name="Martinez-Sanz J."/>
            <person name="Meinnel T."/>
        </authorList>
    </citation>
    <scope>FUNCTION</scope>
    <scope>CATALYTIC ACTIVITY</scope>
    <scope>SUBCELLULAR LOCATION</scope>
    <scope>TISSUE SPECIFICITY</scope>
    <scope>TRANSIT PEPTIDE CLEAVAGE SITE</scope>
</reference>
<reference key="5">
    <citation type="journal article" date="2004" name="J. Clin. Invest.">
        <title>Human mitochondrial peptide deformylase, a new anticancer target of actinonin-based antibiotics.</title>
        <authorList>
            <person name="Lee M.D."/>
            <person name="She Y."/>
            <person name="Soskis M.J."/>
            <person name="Borella C.P."/>
            <person name="Gardner J.R."/>
            <person name="Hayes P.A."/>
            <person name="Dy B.M."/>
            <person name="Heaney M.L."/>
            <person name="Philips M.R."/>
            <person name="Bornmann W.G."/>
            <person name="Sirotnak F.M."/>
            <person name="Scheinberg D.A."/>
        </authorList>
    </citation>
    <scope>FUNCTION</scope>
    <scope>CATALYTIC ACTIVITY</scope>
    <scope>SUBCELLULAR LOCATION</scope>
</reference>
<reference key="6">
    <citation type="journal article" date="2015" name="Proteomics">
        <title>N-terminome analysis of the human mitochondrial proteome.</title>
        <authorList>
            <person name="Vaca Jacome A.S."/>
            <person name="Rabilloud T."/>
            <person name="Schaeffer-Reiss C."/>
            <person name="Rompais M."/>
            <person name="Ayoub D."/>
            <person name="Lane L."/>
            <person name="Bairoch A."/>
            <person name="Van Dorsselaer A."/>
            <person name="Carapito C."/>
        </authorList>
    </citation>
    <scope>IDENTIFICATION BY MASS SPECTROMETRY [LARGE SCALE ANALYSIS]</scope>
</reference>
<reference key="7">
    <citation type="journal article" date="2009" name="J. Mol. Biol.">
        <title>Structure and activity of human mitochondrial peptide deformylase, a novel cancer target.</title>
        <authorList>
            <person name="Escobar-Alvarez S."/>
            <person name="Goldgur Y."/>
            <person name="Yang G."/>
            <person name="Ouerfelli O."/>
            <person name="Li Y."/>
            <person name="Scheinberg D.A."/>
        </authorList>
    </citation>
    <scope>X-RAY CRYSTALLOGRAPHY (1.7 ANGSTROMS) OF 64-243 IN COMPLEX WITH SUBSTRATE ANALOG AND COBALT ION</scope>
    <scope>FUNCTION</scope>
    <scope>CATALYTIC ACTIVITY</scope>
    <scope>COFACTOR</scope>
    <scope>METAL-BINDING SITES</scope>
    <scope>SUBSTRATE-BINDING SITES</scope>
    <scope>SUBUNIT</scope>
</reference>